<sequence length="356" mass="39395">MDVASARSISSHPSYYGKPICSSQSSLIRISRDKVCCFGRISNGMTSFTTSLHAVPSEKFMGETRRTGIQWSNRSLRHDPYRFLDKKSPRSSQLARDITVRADLSGAATPDSSFPEPEIKLSSRLRGIFFCVVAGISATFLIVLMIIGHPFVLLFDPYRRKFHHFIAKLWASISIYPFYKINIEGLENLPSSDTPAVYVSNHQSFLDIYTLLSLGKSFKFISKTGIFVIPIIGWAMSMMGVVPLKRMDPRSQVDCLKRCMELLKKGASVFFFPEGTRSKDGRLGSFKKGAFTVAAKTGVAVVPITLMGTGKIMPTGSEGILNHGNVRVIIHKPIHGSKADVLCNEARSKIAESMDL</sequence>
<protein>
    <recommendedName>
        <fullName evidence="10">1-acyl-sn-glycerol-3-phosphate acyltransferase LPAT1, chloroplastic</fullName>
        <ecNumber evidence="3">2.3.1.51</ecNumber>
        <ecNumber evidence="4">2.3.1.n4</ecNumber>
    </recommendedName>
    <alternativeName>
        <fullName evidence="8">Lysophosphatidyl acyltransferase 1</fullName>
    </alternativeName>
    <alternativeName>
        <fullName evidence="10">Protein EMBRYO DEFECTIVE 1995</fullName>
    </alternativeName>
</protein>
<dbReference type="EC" id="2.3.1.51" evidence="3"/>
<dbReference type="EC" id="2.3.1.n4" evidence="4"/>
<dbReference type="EMBL" id="AL161577">
    <property type="protein sequence ID" value="CAB79776.1"/>
    <property type="molecule type" value="Genomic_DNA"/>
</dbReference>
<dbReference type="EMBL" id="CP002687">
    <property type="protein sequence ID" value="AEE85783.1"/>
    <property type="molecule type" value="Genomic_DNA"/>
</dbReference>
<dbReference type="EMBL" id="AY136460">
    <property type="protein sequence ID" value="AAM97125.1"/>
    <property type="molecule type" value="mRNA"/>
</dbReference>
<dbReference type="EMBL" id="BT006253">
    <property type="protein sequence ID" value="AAP13361.1"/>
    <property type="molecule type" value="mRNA"/>
</dbReference>
<dbReference type="EMBL" id="AK118028">
    <property type="protein sequence ID" value="BAC42660.1"/>
    <property type="molecule type" value="mRNA"/>
</dbReference>
<dbReference type="PIR" id="G85357">
    <property type="entry name" value="G85357"/>
</dbReference>
<dbReference type="RefSeq" id="NP_194787.2">
    <molecule id="Q8GXU8-1"/>
    <property type="nucleotide sequence ID" value="NM_119204.4"/>
</dbReference>
<dbReference type="SMR" id="Q8GXU8"/>
<dbReference type="BioGRID" id="14468">
    <property type="interactions" value="1"/>
</dbReference>
<dbReference type="FunCoup" id="Q8GXU8">
    <property type="interactions" value="1848"/>
</dbReference>
<dbReference type="STRING" id="3702.Q8GXU8"/>
<dbReference type="PaxDb" id="3702-AT4G30580.1"/>
<dbReference type="ProteomicsDB" id="238444">
    <molecule id="Q8GXU8-1"/>
</dbReference>
<dbReference type="EnsemblPlants" id="AT4G30580.1">
    <molecule id="Q8GXU8-1"/>
    <property type="protein sequence ID" value="AT4G30580.1"/>
    <property type="gene ID" value="AT4G30580"/>
</dbReference>
<dbReference type="GeneID" id="829181"/>
<dbReference type="Gramene" id="AT4G30580.1">
    <molecule id="Q8GXU8-1"/>
    <property type="protein sequence ID" value="AT4G30580.1"/>
    <property type="gene ID" value="AT4G30580"/>
</dbReference>
<dbReference type="KEGG" id="ath:AT4G30580"/>
<dbReference type="Araport" id="AT4G30580"/>
<dbReference type="TAIR" id="AT4G30580">
    <property type="gene designation" value="ATS2"/>
</dbReference>
<dbReference type="eggNOG" id="KOG2848">
    <property type="taxonomic scope" value="Eukaryota"/>
</dbReference>
<dbReference type="HOGENOM" id="CLU_027938_1_0_1"/>
<dbReference type="InParanoid" id="Q8GXU8"/>
<dbReference type="OMA" id="YPFYKIN"/>
<dbReference type="OrthoDB" id="417078at2759"/>
<dbReference type="PhylomeDB" id="Q8GXU8"/>
<dbReference type="BioCyc" id="MetaCyc:AT4G30580-MONOMER"/>
<dbReference type="BRENDA" id="2.3.1.51">
    <property type="organism ID" value="399"/>
</dbReference>
<dbReference type="UniPathway" id="UPA00557">
    <property type="reaction ID" value="UER00613"/>
</dbReference>
<dbReference type="PRO" id="PR:Q8GXU8"/>
<dbReference type="Proteomes" id="UP000006548">
    <property type="component" value="Chromosome 4"/>
</dbReference>
<dbReference type="ExpressionAtlas" id="Q8GXU8">
    <property type="expression patterns" value="baseline and differential"/>
</dbReference>
<dbReference type="GO" id="GO:0009507">
    <property type="term" value="C:chloroplast"/>
    <property type="evidence" value="ECO:0000314"/>
    <property type="project" value="TAIR"/>
</dbReference>
<dbReference type="GO" id="GO:0009941">
    <property type="term" value="C:chloroplast envelope"/>
    <property type="evidence" value="ECO:0007005"/>
    <property type="project" value="TAIR"/>
</dbReference>
<dbReference type="GO" id="GO:0031969">
    <property type="term" value="C:chloroplast membrane"/>
    <property type="evidence" value="ECO:0000314"/>
    <property type="project" value="UniProtKB"/>
</dbReference>
<dbReference type="GO" id="GO:0005886">
    <property type="term" value="C:plasma membrane"/>
    <property type="evidence" value="ECO:0007005"/>
    <property type="project" value="TAIR"/>
</dbReference>
<dbReference type="GO" id="GO:0009536">
    <property type="term" value="C:plastid"/>
    <property type="evidence" value="ECO:0007005"/>
    <property type="project" value="TAIR"/>
</dbReference>
<dbReference type="GO" id="GO:0003841">
    <property type="term" value="F:1-acylglycerol-3-phosphate O-acyltransferase activity"/>
    <property type="evidence" value="ECO:0000314"/>
    <property type="project" value="UniProtKB"/>
</dbReference>
<dbReference type="GO" id="GO:0016024">
    <property type="term" value="P:CDP-diacylglycerol biosynthetic process"/>
    <property type="evidence" value="ECO:0000314"/>
    <property type="project" value="UniProtKB"/>
</dbReference>
<dbReference type="GO" id="GO:0009793">
    <property type="term" value="P:embryo development ending in seed dormancy"/>
    <property type="evidence" value="ECO:0000315"/>
    <property type="project" value="TAIR"/>
</dbReference>
<dbReference type="GO" id="GO:0006655">
    <property type="term" value="P:phosphatidylglycerol biosynthetic process"/>
    <property type="evidence" value="ECO:0000315"/>
    <property type="project" value="TAIR"/>
</dbReference>
<dbReference type="CDD" id="cd07989">
    <property type="entry name" value="LPLAT_AGPAT-like"/>
    <property type="match status" value="1"/>
</dbReference>
<dbReference type="InterPro" id="IPR004552">
    <property type="entry name" value="AGP_acyltrans"/>
</dbReference>
<dbReference type="InterPro" id="IPR002123">
    <property type="entry name" value="Plipid/glycerol_acylTrfase"/>
</dbReference>
<dbReference type="NCBIfam" id="TIGR00530">
    <property type="entry name" value="AGP_acyltrn"/>
    <property type="match status" value="1"/>
</dbReference>
<dbReference type="PANTHER" id="PTHR10434">
    <property type="entry name" value="1-ACYL-SN-GLYCEROL-3-PHOSPHATE ACYLTRANSFERASE"/>
    <property type="match status" value="1"/>
</dbReference>
<dbReference type="PANTHER" id="PTHR10434:SF60">
    <property type="entry name" value="1-ACYL-SN-GLYCEROL-3-PHOSPHATE ACYLTRANSFERASE LPAT1, CHLOROPLASTIC"/>
    <property type="match status" value="1"/>
</dbReference>
<dbReference type="Pfam" id="PF01553">
    <property type="entry name" value="Acyltransferase"/>
    <property type="match status" value="1"/>
</dbReference>
<dbReference type="SMART" id="SM00563">
    <property type="entry name" value="PlsC"/>
    <property type="match status" value="1"/>
</dbReference>
<dbReference type="SUPFAM" id="SSF69593">
    <property type="entry name" value="Glycerol-3-phosphate (1)-acyltransferase"/>
    <property type="match status" value="1"/>
</dbReference>
<organism>
    <name type="scientific">Arabidopsis thaliana</name>
    <name type="common">Mouse-ear cress</name>
    <dbReference type="NCBI Taxonomy" id="3702"/>
    <lineage>
        <taxon>Eukaryota</taxon>
        <taxon>Viridiplantae</taxon>
        <taxon>Streptophyta</taxon>
        <taxon>Embryophyta</taxon>
        <taxon>Tracheophyta</taxon>
        <taxon>Spermatophyta</taxon>
        <taxon>Magnoliopsida</taxon>
        <taxon>eudicotyledons</taxon>
        <taxon>Gunneridae</taxon>
        <taxon>Pentapetalae</taxon>
        <taxon>rosids</taxon>
        <taxon>malvids</taxon>
        <taxon>Brassicales</taxon>
        <taxon>Brassicaceae</taxon>
        <taxon>Camelineae</taxon>
        <taxon>Arabidopsis</taxon>
    </lineage>
</organism>
<evidence type="ECO:0000250" key="1">
    <source>
        <dbReference type="UniProtKB" id="Q9D517"/>
    </source>
</evidence>
<evidence type="ECO:0000255" key="2"/>
<evidence type="ECO:0000269" key="3">
    <source>
    </source>
</evidence>
<evidence type="ECO:0000269" key="4">
    <source>
    </source>
</evidence>
<evidence type="ECO:0000269" key="5">
    <source>
    </source>
</evidence>
<evidence type="ECO:0000269" key="6">
    <source>
    </source>
</evidence>
<evidence type="ECO:0000303" key="7">
    <source>
    </source>
</evidence>
<evidence type="ECO:0000303" key="8">
    <source>
    </source>
</evidence>
<evidence type="ECO:0000303" key="9">
    <source>
    </source>
</evidence>
<evidence type="ECO:0000305" key="10"/>
<evidence type="ECO:0000312" key="11">
    <source>
        <dbReference type="Araport" id="AT4G30580"/>
    </source>
</evidence>
<evidence type="ECO:0000312" key="12">
    <source>
        <dbReference type="EMBL" id="CAB79776.1"/>
    </source>
</evidence>
<reference key="1">
    <citation type="journal article" date="1999" name="Nature">
        <title>Sequence and analysis of chromosome 4 of the plant Arabidopsis thaliana.</title>
        <authorList>
            <person name="Mayer K.F.X."/>
            <person name="Schueller C."/>
            <person name="Wambutt R."/>
            <person name="Murphy G."/>
            <person name="Volckaert G."/>
            <person name="Pohl T."/>
            <person name="Duesterhoeft A."/>
            <person name="Stiekema W."/>
            <person name="Entian K.-D."/>
            <person name="Terryn N."/>
            <person name="Harris B."/>
            <person name="Ansorge W."/>
            <person name="Brandt P."/>
            <person name="Grivell L.A."/>
            <person name="Rieger M."/>
            <person name="Weichselgartner M."/>
            <person name="de Simone V."/>
            <person name="Obermaier B."/>
            <person name="Mache R."/>
            <person name="Mueller M."/>
            <person name="Kreis M."/>
            <person name="Delseny M."/>
            <person name="Puigdomenech P."/>
            <person name="Watson M."/>
            <person name="Schmidtheini T."/>
            <person name="Reichert B."/>
            <person name="Portetelle D."/>
            <person name="Perez-Alonso M."/>
            <person name="Boutry M."/>
            <person name="Bancroft I."/>
            <person name="Vos P."/>
            <person name="Hoheisel J."/>
            <person name="Zimmermann W."/>
            <person name="Wedler H."/>
            <person name="Ridley P."/>
            <person name="Langham S.-A."/>
            <person name="McCullagh B."/>
            <person name="Bilham L."/>
            <person name="Robben J."/>
            <person name="van der Schueren J."/>
            <person name="Grymonprez B."/>
            <person name="Chuang Y.-J."/>
            <person name="Vandenbussche F."/>
            <person name="Braeken M."/>
            <person name="Weltjens I."/>
            <person name="Voet M."/>
            <person name="Bastiaens I."/>
            <person name="Aert R."/>
            <person name="Defoor E."/>
            <person name="Weitzenegger T."/>
            <person name="Bothe G."/>
            <person name="Ramsperger U."/>
            <person name="Hilbert H."/>
            <person name="Braun M."/>
            <person name="Holzer E."/>
            <person name="Brandt A."/>
            <person name="Peters S."/>
            <person name="van Staveren M."/>
            <person name="Dirkse W."/>
            <person name="Mooijman P."/>
            <person name="Klein Lankhorst R."/>
            <person name="Rose M."/>
            <person name="Hauf J."/>
            <person name="Koetter P."/>
            <person name="Berneiser S."/>
            <person name="Hempel S."/>
            <person name="Feldpausch M."/>
            <person name="Lamberth S."/>
            <person name="Van den Daele H."/>
            <person name="De Keyser A."/>
            <person name="Buysshaert C."/>
            <person name="Gielen J."/>
            <person name="Villarroel R."/>
            <person name="De Clercq R."/>
            <person name="van Montagu M."/>
            <person name="Rogers J."/>
            <person name="Cronin A."/>
            <person name="Quail M.A."/>
            <person name="Bray-Allen S."/>
            <person name="Clark L."/>
            <person name="Doggett J."/>
            <person name="Hall S."/>
            <person name="Kay M."/>
            <person name="Lennard N."/>
            <person name="McLay K."/>
            <person name="Mayes R."/>
            <person name="Pettett A."/>
            <person name="Rajandream M.A."/>
            <person name="Lyne M."/>
            <person name="Benes V."/>
            <person name="Rechmann S."/>
            <person name="Borkova D."/>
            <person name="Bloecker H."/>
            <person name="Scharfe M."/>
            <person name="Grimm M."/>
            <person name="Loehnert T.-H."/>
            <person name="Dose S."/>
            <person name="de Haan M."/>
            <person name="Maarse A.C."/>
            <person name="Schaefer M."/>
            <person name="Mueller-Auer S."/>
            <person name="Gabel C."/>
            <person name="Fuchs M."/>
            <person name="Fartmann B."/>
            <person name="Granderath K."/>
            <person name="Dauner D."/>
            <person name="Herzl A."/>
            <person name="Neumann S."/>
            <person name="Argiriou A."/>
            <person name="Vitale D."/>
            <person name="Liguori R."/>
            <person name="Piravandi E."/>
            <person name="Massenet O."/>
            <person name="Quigley F."/>
            <person name="Clabauld G."/>
            <person name="Muendlein A."/>
            <person name="Felber R."/>
            <person name="Schnabl S."/>
            <person name="Hiller R."/>
            <person name="Schmidt W."/>
            <person name="Lecharny A."/>
            <person name="Aubourg S."/>
            <person name="Chefdor F."/>
            <person name="Cooke R."/>
            <person name="Berger C."/>
            <person name="Monfort A."/>
            <person name="Casacuberta E."/>
            <person name="Gibbons T."/>
            <person name="Weber N."/>
            <person name="Vandenbol M."/>
            <person name="Bargues M."/>
            <person name="Terol J."/>
            <person name="Torres A."/>
            <person name="Perez-Perez A."/>
            <person name="Purnelle B."/>
            <person name="Bent E."/>
            <person name="Johnson S."/>
            <person name="Tacon D."/>
            <person name="Jesse T."/>
            <person name="Heijnen L."/>
            <person name="Schwarz S."/>
            <person name="Scholler P."/>
            <person name="Heber S."/>
            <person name="Francs P."/>
            <person name="Bielke C."/>
            <person name="Frishman D."/>
            <person name="Haase D."/>
            <person name="Lemcke K."/>
            <person name="Mewes H.-W."/>
            <person name="Stocker S."/>
            <person name="Zaccaria P."/>
            <person name="Bevan M."/>
            <person name="Wilson R.K."/>
            <person name="de la Bastide M."/>
            <person name="Habermann K."/>
            <person name="Parnell L."/>
            <person name="Dedhia N."/>
            <person name="Gnoj L."/>
            <person name="Schutz K."/>
            <person name="Huang E."/>
            <person name="Spiegel L."/>
            <person name="Sekhon M."/>
            <person name="Murray J."/>
            <person name="Sheet P."/>
            <person name="Cordes M."/>
            <person name="Abu-Threideh J."/>
            <person name="Stoneking T."/>
            <person name="Kalicki J."/>
            <person name="Graves T."/>
            <person name="Harmon G."/>
            <person name="Edwards J."/>
            <person name="Latreille P."/>
            <person name="Courtney L."/>
            <person name="Cloud J."/>
            <person name="Abbott A."/>
            <person name="Scott K."/>
            <person name="Johnson D."/>
            <person name="Minx P."/>
            <person name="Bentley D."/>
            <person name="Fulton B."/>
            <person name="Miller N."/>
            <person name="Greco T."/>
            <person name="Kemp K."/>
            <person name="Kramer J."/>
            <person name="Fulton L."/>
            <person name="Mardis E."/>
            <person name="Dante M."/>
            <person name="Pepin K."/>
            <person name="Hillier L.W."/>
            <person name="Nelson J."/>
            <person name="Spieth J."/>
            <person name="Ryan E."/>
            <person name="Andrews S."/>
            <person name="Geisel C."/>
            <person name="Layman D."/>
            <person name="Du H."/>
            <person name="Ali J."/>
            <person name="Berghoff A."/>
            <person name="Jones K."/>
            <person name="Drone K."/>
            <person name="Cotton M."/>
            <person name="Joshu C."/>
            <person name="Antonoiu B."/>
            <person name="Zidanic M."/>
            <person name="Strong C."/>
            <person name="Sun H."/>
            <person name="Lamar B."/>
            <person name="Yordan C."/>
            <person name="Ma P."/>
            <person name="Zhong J."/>
            <person name="Preston R."/>
            <person name="Vil D."/>
            <person name="Shekher M."/>
            <person name="Matero A."/>
            <person name="Shah R."/>
            <person name="Swaby I.K."/>
            <person name="O'Shaughnessy A."/>
            <person name="Rodriguez M."/>
            <person name="Hoffman J."/>
            <person name="Till S."/>
            <person name="Granat S."/>
            <person name="Shohdy N."/>
            <person name="Hasegawa A."/>
            <person name="Hameed A."/>
            <person name="Lodhi M."/>
            <person name="Johnson A."/>
            <person name="Chen E."/>
            <person name="Marra M.A."/>
            <person name="Martienssen R."/>
            <person name="McCombie W.R."/>
        </authorList>
    </citation>
    <scope>NUCLEOTIDE SEQUENCE [LARGE SCALE GENOMIC DNA]</scope>
    <source>
        <strain>cv. Columbia</strain>
    </source>
</reference>
<reference key="2">
    <citation type="journal article" date="2017" name="Plant J.">
        <title>Araport11: a complete reannotation of the Arabidopsis thaliana reference genome.</title>
        <authorList>
            <person name="Cheng C.Y."/>
            <person name="Krishnakumar V."/>
            <person name="Chan A.P."/>
            <person name="Thibaud-Nissen F."/>
            <person name="Schobel S."/>
            <person name="Town C.D."/>
        </authorList>
    </citation>
    <scope>GENOME REANNOTATION</scope>
    <source>
        <strain>cv. Columbia</strain>
    </source>
</reference>
<reference key="3">
    <citation type="journal article" date="2003" name="Science">
        <title>Empirical analysis of transcriptional activity in the Arabidopsis genome.</title>
        <authorList>
            <person name="Yamada K."/>
            <person name="Lim J."/>
            <person name="Dale J.M."/>
            <person name="Chen H."/>
            <person name="Shinn P."/>
            <person name="Palm C.J."/>
            <person name="Southwick A.M."/>
            <person name="Wu H.C."/>
            <person name="Kim C.J."/>
            <person name="Nguyen M."/>
            <person name="Pham P.K."/>
            <person name="Cheuk R.F."/>
            <person name="Karlin-Newmann G."/>
            <person name="Liu S.X."/>
            <person name="Lam B."/>
            <person name="Sakano H."/>
            <person name="Wu T."/>
            <person name="Yu G."/>
            <person name="Miranda M."/>
            <person name="Quach H.L."/>
            <person name="Tripp M."/>
            <person name="Chang C.H."/>
            <person name="Lee J.M."/>
            <person name="Toriumi M.J."/>
            <person name="Chan M.M."/>
            <person name="Tang C.C."/>
            <person name="Onodera C.S."/>
            <person name="Deng J.M."/>
            <person name="Akiyama K."/>
            <person name="Ansari Y."/>
            <person name="Arakawa T."/>
            <person name="Banh J."/>
            <person name="Banno F."/>
            <person name="Bowser L."/>
            <person name="Brooks S.Y."/>
            <person name="Carninci P."/>
            <person name="Chao Q."/>
            <person name="Choy N."/>
            <person name="Enju A."/>
            <person name="Goldsmith A.D."/>
            <person name="Gurjal M."/>
            <person name="Hansen N.F."/>
            <person name="Hayashizaki Y."/>
            <person name="Johnson-Hopson C."/>
            <person name="Hsuan V.W."/>
            <person name="Iida K."/>
            <person name="Karnes M."/>
            <person name="Khan S."/>
            <person name="Koesema E."/>
            <person name="Ishida J."/>
            <person name="Jiang P.X."/>
            <person name="Jones T."/>
            <person name="Kawai J."/>
            <person name="Kamiya A."/>
            <person name="Meyers C."/>
            <person name="Nakajima M."/>
            <person name="Narusaka M."/>
            <person name="Seki M."/>
            <person name="Sakurai T."/>
            <person name="Satou M."/>
            <person name="Tamse R."/>
            <person name="Vaysberg M."/>
            <person name="Wallender E.K."/>
            <person name="Wong C."/>
            <person name="Yamamura Y."/>
            <person name="Yuan S."/>
            <person name="Shinozaki K."/>
            <person name="Davis R.W."/>
            <person name="Theologis A."/>
            <person name="Ecker J.R."/>
        </authorList>
    </citation>
    <scope>NUCLEOTIDE SEQUENCE [LARGE SCALE MRNA] (ISOFORM 2)</scope>
    <source>
        <strain>cv. Columbia</strain>
    </source>
</reference>
<reference key="4">
    <citation type="journal article" date="2002" name="Science">
        <title>Functional annotation of a full-length Arabidopsis cDNA collection.</title>
        <authorList>
            <person name="Seki M."/>
            <person name="Narusaka M."/>
            <person name="Kamiya A."/>
            <person name="Ishida J."/>
            <person name="Satou M."/>
            <person name="Sakurai T."/>
            <person name="Nakajima M."/>
            <person name="Enju A."/>
            <person name="Akiyama K."/>
            <person name="Oono Y."/>
            <person name="Muramatsu M."/>
            <person name="Hayashizaki Y."/>
            <person name="Kawai J."/>
            <person name="Carninci P."/>
            <person name="Itoh M."/>
            <person name="Ishii Y."/>
            <person name="Arakawa T."/>
            <person name="Shibata K."/>
            <person name="Shinagawa A."/>
            <person name="Shinozaki K."/>
        </authorList>
    </citation>
    <scope>NUCLEOTIDE SEQUENCE [LARGE SCALE MRNA] (ISOFORM 1)</scope>
    <source>
        <strain>cv. Columbia</strain>
    </source>
</reference>
<reference key="5">
    <citation type="journal article" date="2004" name="Plant Cell Physiol.">
        <title>Loss of plastidic lysophosphatidic acid acyltransferase causes embryo-lethality in Arabidopsis.</title>
        <authorList>
            <person name="Yu B."/>
            <person name="Wakao S."/>
            <person name="Fan J."/>
            <person name="Benning C."/>
        </authorList>
    </citation>
    <scope>FUNCTION</scope>
    <scope>CATALYTIC ACTIVITY</scope>
    <scope>SUBCELLULAR LOCATION</scope>
    <scope>TISSUE SPECIFICITY</scope>
    <scope>DEVELOPMENTAL STAGE</scope>
    <scope>DISRUPTION PHENOTYPE</scope>
</reference>
<reference key="6">
    <citation type="journal article" date="2004" name="Plant Physiol.">
        <title>Plastid lysophosphatidyl acyltransferase is essential for embryo development in Arabidopsis.</title>
        <authorList>
            <person name="Kim H.U."/>
            <person name="Huang A.H.C."/>
        </authorList>
    </citation>
    <scope>FUNCTION</scope>
    <scope>CATALYTIC ACTIVITY</scope>
    <scope>TISSUE SPECIFICITY</scope>
    <scope>DISRUPTION PHENOTYPE</scope>
</reference>
<reference key="7">
    <citation type="journal article" date="2010" name="Plant Physiol.">
        <title>A mutation in the LPAT1 gene suppresses the sensitivity of fab1 plants to low temperature.</title>
        <authorList>
            <person name="Kim H.U."/>
            <person name="Vijayan P."/>
            <person name="Carlsson A.S."/>
            <person name="Barkan L."/>
            <person name="Browse J."/>
        </authorList>
    </citation>
    <scope>MUTAGENESIS OF ALA-290</scope>
</reference>
<reference key="8">
    <citation type="journal article" date="2015" name="Plant Physiol.">
        <title>Mutations in the prokaryotic pathway rescue the fatty acid biosynthesis1 mutant in the cold.</title>
        <authorList>
            <person name="Gao J."/>
            <person name="Wallis J.G."/>
            <person name="Browse J."/>
        </authorList>
    </citation>
    <scope>MUTAGENESIS OF PRO-230</scope>
</reference>
<feature type="transit peptide" description="Chloroplast" evidence="2">
    <location>
        <begin position="1"/>
        <end position="56"/>
    </location>
</feature>
<feature type="chain" id="PRO_0000024701" description="1-acyl-sn-glycerol-3-phosphate acyltransferase LPAT1, chloroplastic">
    <location>
        <begin position="57"/>
        <end position="356"/>
    </location>
</feature>
<feature type="transmembrane region" description="Helical" evidence="2">
    <location>
        <begin position="127"/>
        <end position="147"/>
    </location>
</feature>
<feature type="transmembrane region" description="Helical" evidence="2">
    <location>
        <begin position="224"/>
        <end position="244"/>
    </location>
</feature>
<feature type="short sequence motif" description="HXXXXD motif" evidence="10">
    <location>
        <begin position="202"/>
        <end position="207"/>
    </location>
</feature>
<feature type="splice variant" id="VSP_013594" description="In isoform 2." evidence="7">
    <location>
        <begin position="1"/>
        <end position="144"/>
    </location>
</feature>
<feature type="mutagenesis site" description="In lpat1-4; suppression of the sensitivity of fab1 mutant plants to low temperature." evidence="6">
    <original>P</original>
    <variation>L</variation>
    <location>
        <position position="230"/>
    </location>
</feature>
<feature type="mutagenesis site" description="In lpat1-3; suppression of the sensitivity of fab1 mutant plants to low temperature." evidence="5">
    <original>A</original>
    <variation>T</variation>
    <location>
        <position position="290"/>
    </location>
</feature>
<comment type="function">
    <text evidence="3 4">Plastidial enzyme of the prokaryotic glycerol-3-phosphate pathway that converts lysophosphatidic acid (LPA) into phosphatidic acid by incorporating an acyl moiety at position sn-2 (PubMed:15169931). Utilizes palmitoyl-ACP (16:0-ACP) to produce phosphatidic acid containing a saturated group at position sn-2, which is characteristic of lipids synthesized by the prokaryotic pathway (PubMed:15169931). In vitro, can use 16:0-CoA as acyl donor (PubMed:14976237). Essential for embryo development during the transition from the globular to the heart stage when chloroplasts begin to form (PubMed:14976237, PubMed:15169931).</text>
</comment>
<comment type="catalytic activity">
    <reaction evidence="4">
        <text>a fatty acyl-[ACP] + a 1-acyl-sn-glycero-3-phosphate = a 1,2-diacyl-sn-glycero-3-phosphate + holo-[ACP]</text>
        <dbReference type="Rhea" id="RHEA:42296"/>
        <dbReference type="Rhea" id="RHEA-COMP:9685"/>
        <dbReference type="Rhea" id="RHEA-COMP:14125"/>
        <dbReference type="ChEBI" id="CHEBI:57970"/>
        <dbReference type="ChEBI" id="CHEBI:58608"/>
        <dbReference type="ChEBI" id="CHEBI:64479"/>
        <dbReference type="ChEBI" id="CHEBI:138651"/>
        <dbReference type="EC" id="2.3.1.n4"/>
    </reaction>
    <physiologicalReaction direction="left-to-right" evidence="10">
        <dbReference type="Rhea" id="RHEA:42297"/>
    </physiologicalReaction>
</comment>
<comment type="catalytic activity">
    <reaction evidence="3">
        <text>a 1-acyl-sn-glycero-3-phosphate + an acyl-CoA = a 1,2-diacyl-sn-glycero-3-phosphate + CoA</text>
        <dbReference type="Rhea" id="RHEA:19709"/>
        <dbReference type="ChEBI" id="CHEBI:57287"/>
        <dbReference type="ChEBI" id="CHEBI:57970"/>
        <dbReference type="ChEBI" id="CHEBI:58342"/>
        <dbReference type="ChEBI" id="CHEBI:58608"/>
        <dbReference type="EC" id="2.3.1.51"/>
    </reaction>
    <physiologicalReaction direction="left-to-right" evidence="10">
        <dbReference type="Rhea" id="RHEA:19710"/>
    </physiologicalReaction>
</comment>
<comment type="pathway">
    <text evidence="10">Phospholipid metabolism; CDP-diacylglycerol biosynthesis; CDP-diacylglycerol from sn-glycerol 3-phosphate: step 2/3.</text>
</comment>
<comment type="subcellular location">
    <subcellularLocation>
        <location evidence="4">Plastid</location>
        <location evidence="4">Chloroplast membrane</location>
        <topology evidence="2">Multi-pass membrane protein</topology>
    </subcellularLocation>
</comment>
<comment type="alternative products">
    <event type="alternative splicing"/>
    <isoform>
        <id>Q8GXU8-1</id>
        <name>1</name>
        <sequence type="displayed"/>
    </isoform>
    <isoform>
        <id>Q8GXU8-2</id>
        <name>2</name>
        <sequence type="described" ref="VSP_013594"/>
    </isoform>
</comment>
<comment type="tissue specificity">
    <text evidence="3 4">Widely expressed. Expressed at higher level in leaves. Expressed at lower level in silique walls compared to leaves.</text>
</comment>
<comment type="developmental stage">
    <text evidence="4">Expression transiently increases in siliques 4 hours after flowering.</text>
</comment>
<comment type="domain">
    <text evidence="1">The HXXXXD motif is essential for acyltransferase activity and may constitute the binding site for the phosphate moiety of the glycerol-3-phosphate.</text>
</comment>
<comment type="disruption phenotype">
    <text evidence="3 4">Embryonic lethality due to embryo development arrest at globular stage.</text>
</comment>
<comment type="similarity">
    <text evidence="10">Belongs to the 1-acyl-sn-glycerol-3-phosphate acyltransferase family.</text>
</comment>
<accession>Q8GXU8</accession>
<accession>Q9M0A2</accession>
<keyword id="KW-0012">Acyltransferase</keyword>
<keyword id="KW-0025">Alternative splicing</keyword>
<keyword id="KW-0150">Chloroplast</keyword>
<keyword id="KW-0217">Developmental protein</keyword>
<keyword id="KW-0444">Lipid biosynthesis</keyword>
<keyword id="KW-0443">Lipid metabolism</keyword>
<keyword id="KW-0472">Membrane</keyword>
<keyword id="KW-0594">Phospholipid biosynthesis</keyword>
<keyword id="KW-1208">Phospholipid metabolism</keyword>
<keyword id="KW-0934">Plastid</keyword>
<keyword id="KW-1185">Reference proteome</keyword>
<keyword id="KW-0808">Transferase</keyword>
<keyword id="KW-0809">Transit peptide</keyword>
<keyword id="KW-0812">Transmembrane</keyword>
<keyword id="KW-1133">Transmembrane helix</keyword>
<proteinExistence type="evidence at protein level"/>
<gene>
    <name evidence="10" type="primary">LPAT1</name>
    <name evidence="9" type="synonym">ATS2</name>
    <name evidence="10" type="synonym">EMB1995</name>
    <name evidence="8" type="synonym">LPAAT1</name>
    <name evidence="11" type="ordered locus">At4g30580</name>
    <name evidence="12" type="ORF">F17I23.80</name>
</gene>
<name>LPAT1_ARATH</name>